<dbReference type="EMBL" id="AK013693">
    <property type="protein sequence ID" value="BAB28957.1"/>
    <property type="molecule type" value="mRNA"/>
</dbReference>
<dbReference type="EMBL" id="AK002530">
    <property type="protein sequence ID" value="BAB22166.1"/>
    <property type="molecule type" value="mRNA"/>
</dbReference>
<dbReference type="EMBL" id="AK003427">
    <property type="protein sequence ID" value="BAB22785.1"/>
    <property type="molecule type" value="mRNA"/>
</dbReference>
<dbReference type="EMBL" id="BC024337">
    <property type="protein sequence ID" value="AAH24337.1"/>
    <property type="molecule type" value="mRNA"/>
</dbReference>
<dbReference type="CCDS" id="CCDS24137.1"/>
<dbReference type="RefSeq" id="NP_001346405.1">
    <property type="nucleotide sequence ID" value="NM_001359476.1"/>
</dbReference>
<dbReference type="RefSeq" id="NP_080341.1">
    <property type="nucleotide sequence ID" value="NM_026065.4"/>
</dbReference>
<dbReference type="RefSeq" id="XP_006514042.1">
    <property type="nucleotide sequence ID" value="XM_006513979.3"/>
</dbReference>
<dbReference type="SMR" id="Q9CPV3"/>
<dbReference type="ComplexPortal" id="CPX-5302">
    <property type="entry name" value="39S mitochondrial large ribosomal subunit"/>
</dbReference>
<dbReference type="FunCoup" id="Q9CPV3">
    <property type="interactions" value="1422"/>
</dbReference>
<dbReference type="STRING" id="10090.ENSMUSP00000075226"/>
<dbReference type="PhosphoSitePlus" id="Q9CPV3"/>
<dbReference type="PaxDb" id="10090-ENSMUSP00000075226"/>
<dbReference type="PeptideAtlas" id="Q9CPV3"/>
<dbReference type="ProteomicsDB" id="260981"/>
<dbReference type="Pumba" id="Q9CPV3"/>
<dbReference type="Antibodypedia" id="30057">
    <property type="antibodies" value="217 antibodies from 21 providers"/>
</dbReference>
<dbReference type="DNASU" id="67270"/>
<dbReference type="Ensembl" id="ENSMUST00000075829.3">
    <property type="protein sequence ID" value="ENSMUSP00000075226.3"/>
    <property type="gene ID" value="ENSMUSG00000062981.6"/>
</dbReference>
<dbReference type="Ensembl" id="ENSMUST00000218893.2">
    <property type="protein sequence ID" value="ENSMUSP00000151636.2"/>
    <property type="gene ID" value="ENSMUSG00000062981.6"/>
</dbReference>
<dbReference type="GeneID" id="67270"/>
<dbReference type="KEGG" id="mmu:67270"/>
<dbReference type="UCSC" id="uc007gwi.1">
    <property type="organism name" value="mouse"/>
</dbReference>
<dbReference type="AGR" id="MGI:1333774"/>
<dbReference type="CTD" id="28977"/>
<dbReference type="MGI" id="MGI:1333774">
    <property type="gene designation" value="Mrpl42"/>
</dbReference>
<dbReference type="VEuPathDB" id="HostDB:ENSMUSG00000062981"/>
<dbReference type="eggNOG" id="KOG4106">
    <property type="taxonomic scope" value="Eukaryota"/>
</dbReference>
<dbReference type="GeneTree" id="ENSGT00390000010491"/>
<dbReference type="HOGENOM" id="CLU_142926_1_0_1"/>
<dbReference type="InParanoid" id="Q9CPV3"/>
<dbReference type="OMA" id="MASGHLC"/>
<dbReference type="OrthoDB" id="1107506at2759"/>
<dbReference type="PhylomeDB" id="Q9CPV3"/>
<dbReference type="TreeFam" id="TF324368"/>
<dbReference type="Reactome" id="R-MMU-5389840">
    <property type="pathway name" value="Mitochondrial translation elongation"/>
</dbReference>
<dbReference type="Reactome" id="R-MMU-5419276">
    <property type="pathway name" value="Mitochondrial translation termination"/>
</dbReference>
<dbReference type="BioGRID-ORCS" id="67270">
    <property type="hits" value="20 hits in 80 CRISPR screens"/>
</dbReference>
<dbReference type="ChiTaRS" id="Mrpl42">
    <property type="organism name" value="mouse"/>
</dbReference>
<dbReference type="PRO" id="PR:Q9CPV3"/>
<dbReference type="Proteomes" id="UP000000589">
    <property type="component" value="Chromosome 10"/>
</dbReference>
<dbReference type="RNAct" id="Q9CPV3">
    <property type="molecule type" value="protein"/>
</dbReference>
<dbReference type="Bgee" id="ENSMUSG00000062981">
    <property type="expression patterns" value="Expressed in quadriceps femoris and 66 other cell types or tissues"/>
</dbReference>
<dbReference type="ExpressionAtlas" id="Q9CPV3">
    <property type="expression patterns" value="baseline and differential"/>
</dbReference>
<dbReference type="GO" id="GO:0005743">
    <property type="term" value="C:mitochondrial inner membrane"/>
    <property type="evidence" value="ECO:0000303"/>
    <property type="project" value="ComplexPortal"/>
</dbReference>
<dbReference type="GO" id="GO:0005762">
    <property type="term" value="C:mitochondrial large ribosomal subunit"/>
    <property type="evidence" value="ECO:0000250"/>
    <property type="project" value="UniProtKB"/>
</dbReference>
<dbReference type="GO" id="GO:0005763">
    <property type="term" value="C:mitochondrial small ribosomal subunit"/>
    <property type="evidence" value="ECO:0007669"/>
    <property type="project" value="Ensembl"/>
</dbReference>
<dbReference type="GO" id="GO:0005739">
    <property type="term" value="C:mitochondrion"/>
    <property type="evidence" value="ECO:0007005"/>
    <property type="project" value="MGI"/>
</dbReference>
<dbReference type="GO" id="GO:0005886">
    <property type="term" value="C:plasma membrane"/>
    <property type="evidence" value="ECO:0007669"/>
    <property type="project" value="Ensembl"/>
</dbReference>
<dbReference type="GO" id="GO:0032543">
    <property type="term" value="P:mitochondrial translation"/>
    <property type="evidence" value="ECO:0000303"/>
    <property type="project" value="ComplexPortal"/>
</dbReference>
<dbReference type="InterPro" id="IPR019346">
    <property type="entry name" value="Ribosomal_mL42"/>
</dbReference>
<dbReference type="PANTHER" id="PTHR13450:SF4">
    <property type="entry name" value="LARGE RIBOSOMAL SUBUNIT PROTEIN ML42"/>
    <property type="match status" value="1"/>
</dbReference>
<dbReference type="PANTHER" id="PTHR13450">
    <property type="entry name" value="MITOCHONDRIAL 39S RIBOSOMAL PROTEIN L42"/>
    <property type="match status" value="1"/>
</dbReference>
<dbReference type="Pfam" id="PF10210">
    <property type="entry name" value="MRP-S32"/>
    <property type="match status" value="1"/>
</dbReference>
<sequence>MAAAVKWAISNRTIWKHLLPIQNGALSSACHKSTYSSLPDDYNCQVDLALTADGRTIVCYHPSVDIPYEHTKPIPQPDLLHNNEETHEQILKAKLEVRKSKQLEQGPMIEQLSKVFYTTKHRWYPHGQYHNRRKKLNPPRDR</sequence>
<name>RM42_MOUSE</name>
<accession>Q9CPV3</accession>
<reference key="1">
    <citation type="journal article" date="2005" name="Science">
        <title>The transcriptional landscape of the mammalian genome.</title>
        <authorList>
            <person name="Carninci P."/>
            <person name="Kasukawa T."/>
            <person name="Katayama S."/>
            <person name="Gough J."/>
            <person name="Frith M.C."/>
            <person name="Maeda N."/>
            <person name="Oyama R."/>
            <person name="Ravasi T."/>
            <person name="Lenhard B."/>
            <person name="Wells C."/>
            <person name="Kodzius R."/>
            <person name="Shimokawa K."/>
            <person name="Bajic V.B."/>
            <person name="Brenner S.E."/>
            <person name="Batalov S."/>
            <person name="Forrest A.R."/>
            <person name="Zavolan M."/>
            <person name="Davis M.J."/>
            <person name="Wilming L.G."/>
            <person name="Aidinis V."/>
            <person name="Allen J.E."/>
            <person name="Ambesi-Impiombato A."/>
            <person name="Apweiler R."/>
            <person name="Aturaliya R.N."/>
            <person name="Bailey T.L."/>
            <person name="Bansal M."/>
            <person name="Baxter L."/>
            <person name="Beisel K.W."/>
            <person name="Bersano T."/>
            <person name="Bono H."/>
            <person name="Chalk A.M."/>
            <person name="Chiu K.P."/>
            <person name="Choudhary V."/>
            <person name="Christoffels A."/>
            <person name="Clutterbuck D.R."/>
            <person name="Crowe M.L."/>
            <person name="Dalla E."/>
            <person name="Dalrymple B.P."/>
            <person name="de Bono B."/>
            <person name="Della Gatta G."/>
            <person name="di Bernardo D."/>
            <person name="Down T."/>
            <person name="Engstrom P."/>
            <person name="Fagiolini M."/>
            <person name="Faulkner G."/>
            <person name="Fletcher C.F."/>
            <person name="Fukushima T."/>
            <person name="Furuno M."/>
            <person name="Futaki S."/>
            <person name="Gariboldi M."/>
            <person name="Georgii-Hemming P."/>
            <person name="Gingeras T.R."/>
            <person name="Gojobori T."/>
            <person name="Green R.E."/>
            <person name="Gustincich S."/>
            <person name="Harbers M."/>
            <person name="Hayashi Y."/>
            <person name="Hensch T.K."/>
            <person name="Hirokawa N."/>
            <person name="Hill D."/>
            <person name="Huminiecki L."/>
            <person name="Iacono M."/>
            <person name="Ikeo K."/>
            <person name="Iwama A."/>
            <person name="Ishikawa T."/>
            <person name="Jakt M."/>
            <person name="Kanapin A."/>
            <person name="Katoh M."/>
            <person name="Kawasawa Y."/>
            <person name="Kelso J."/>
            <person name="Kitamura H."/>
            <person name="Kitano H."/>
            <person name="Kollias G."/>
            <person name="Krishnan S.P."/>
            <person name="Kruger A."/>
            <person name="Kummerfeld S.K."/>
            <person name="Kurochkin I.V."/>
            <person name="Lareau L.F."/>
            <person name="Lazarevic D."/>
            <person name="Lipovich L."/>
            <person name="Liu J."/>
            <person name="Liuni S."/>
            <person name="McWilliam S."/>
            <person name="Madan Babu M."/>
            <person name="Madera M."/>
            <person name="Marchionni L."/>
            <person name="Matsuda H."/>
            <person name="Matsuzawa S."/>
            <person name="Miki H."/>
            <person name="Mignone F."/>
            <person name="Miyake S."/>
            <person name="Morris K."/>
            <person name="Mottagui-Tabar S."/>
            <person name="Mulder N."/>
            <person name="Nakano N."/>
            <person name="Nakauchi H."/>
            <person name="Ng P."/>
            <person name="Nilsson R."/>
            <person name="Nishiguchi S."/>
            <person name="Nishikawa S."/>
            <person name="Nori F."/>
            <person name="Ohara O."/>
            <person name="Okazaki Y."/>
            <person name="Orlando V."/>
            <person name="Pang K.C."/>
            <person name="Pavan W.J."/>
            <person name="Pavesi G."/>
            <person name="Pesole G."/>
            <person name="Petrovsky N."/>
            <person name="Piazza S."/>
            <person name="Reed J."/>
            <person name="Reid J.F."/>
            <person name="Ring B.Z."/>
            <person name="Ringwald M."/>
            <person name="Rost B."/>
            <person name="Ruan Y."/>
            <person name="Salzberg S.L."/>
            <person name="Sandelin A."/>
            <person name="Schneider C."/>
            <person name="Schoenbach C."/>
            <person name="Sekiguchi K."/>
            <person name="Semple C.A."/>
            <person name="Seno S."/>
            <person name="Sessa L."/>
            <person name="Sheng Y."/>
            <person name="Shibata Y."/>
            <person name="Shimada H."/>
            <person name="Shimada K."/>
            <person name="Silva D."/>
            <person name="Sinclair B."/>
            <person name="Sperling S."/>
            <person name="Stupka E."/>
            <person name="Sugiura K."/>
            <person name="Sultana R."/>
            <person name="Takenaka Y."/>
            <person name="Taki K."/>
            <person name="Tammoja K."/>
            <person name="Tan S.L."/>
            <person name="Tang S."/>
            <person name="Taylor M.S."/>
            <person name="Tegner J."/>
            <person name="Teichmann S.A."/>
            <person name="Ueda H.R."/>
            <person name="van Nimwegen E."/>
            <person name="Verardo R."/>
            <person name="Wei C.L."/>
            <person name="Yagi K."/>
            <person name="Yamanishi H."/>
            <person name="Zabarovsky E."/>
            <person name="Zhu S."/>
            <person name="Zimmer A."/>
            <person name="Hide W."/>
            <person name="Bult C."/>
            <person name="Grimmond S.M."/>
            <person name="Teasdale R.D."/>
            <person name="Liu E.T."/>
            <person name="Brusic V."/>
            <person name="Quackenbush J."/>
            <person name="Wahlestedt C."/>
            <person name="Mattick J.S."/>
            <person name="Hume D.A."/>
            <person name="Kai C."/>
            <person name="Sasaki D."/>
            <person name="Tomaru Y."/>
            <person name="Fukuda S."/>
            <person name="Kanamori-Katayama M."/>
            <person name="Suzuki M."/>
            <person name="Aoki J."/>
            <person name="Arakawa T."/>
            <person name="Iida J."/>
            <person name="Imamura K."/>
            <person name="Itoh M."/>
            <person name="Kato T."/>
            <person name="Kawaji H."/>
            <person name="Kawagashira N."/>
            <person name="Kawashima T."/>
            <person name="Kojima M."/>
            <person name="Kondo S."/>
            <person name="Konno H."/>
            <person name="Nakano K."/>
            <person name="Ninomiya N."/>
            <person name="Nishio T."/>
            <person name="Okada M."/>
            <person name="Plessy C."/>
            <person name="Shibata K."/>
            <person name="Shiraki T."/>
            <person name="Suzuki S."/>
            <person name="Tagami M."/>
            <person name="Waki K."/>
            <person name="Watahiki A."/>
            <person name="Okamura-Oho Y."/>
            <person name="Suzuki H."/>
            <person name="Kawai J."/>
            <person name="Hayashizaki Y."/>
        </authorList>
    </citation>
    <scope>NUCLEOTIDE SEQUENCE [LARGE SCALE MRNA]</scope>
    <source>
        <strain>C57BL/6J</strain>
        <tissue>Embryo</tissue>
        <tissue>Hippocampus</tissue>
        <tissue>Kidney</tissue>
    </source>
</reference>
<reference key="2">
    <citation type="journal article" date="2004" name="Genome Res.">
        <title>The status, quality, and expansion of the NIH full-length cDNA project: the Mammalian Gene Collection (MGC).</title>
        <authorList>
            <consortium name="The MGC Project Team"/>
        </authorList>
    </citation>
    <scope>NUCLEOTIDE SEQUENCE [LARGE SCALE MRNA]</scope>
    <source>
        <tissue>Colon</tissue>
    </source>
</reference>
<reference key="3">
    <citation type="journal article" date="2010" name="Cell">
        <title>A tissue-specific atlas of mouse protein phosphorylation and expression.</title>
        <authorList>
            <person name="Huttlin E.L."/>
            <person name="Jedrychowski M.P."/>
            <person name="Elias J.E."/>
            <person name="Goswami T."/>
            <person name="Rad R."/>
            <person name="Beausoleil S.A."/>
            <person name="Villen J."/>
            <person name="Haas W."/>
            <person name="Sowa M.E."/>
            <person name="Gygi S.P."/>
        </authorList>
    </citation>
    <scope>IDENTIFICATION BY MASS SPECTROMETRY [LARGE SCALE ANALYSIS]</scope>
    <source>
        <tissue>Heart</tissue>
    </source>
</reference>
<proteinExistence type="evidence at protein level"/>
<feature type="transit peptide" description="Mitochondrion" evidence="1">
    <location>
        <begin position="1"/>
        <end position="31"/>
    </location>
</feature>
<feature type="chain" id="PRO_0000087725" description="Large ribosomal subunit protein mL42">
    <location>
        <begin position="32"/>
        <end position="142"/>
    </location>
</feature>
<gene>
    <name type="primary">Mrpl42</name>
    <name type="synonym">D10Ertd322e</name>
    <name type="synonym">Mrps32</name>
</gene>
<protein>
    <recommendedName>
        <fullName evidence="3">Large ribosomal subunit protein mL42</fullName>
    </recommendedName>
    <alternativeName>
        <fullName>28S ribosomal protein S32, mitochondrial</fullName>
        <shortName>MRP-S32</shortName>
        <shortName>S32mt</shortName>
    </alternativeName>
    <alternativeName>
        <fullName>39S ribosomal protein L31, mitochondrial</fullName>
        <shortName>L31mt</shortName>
        <shortName>MRP-L31</shortName>
    </alternativeName>
    <alternativeName>
        <fullName>39S ribosomal protein L42, mitochondrial</fullName>
        <shortName>L42mt</shortName>
        <shortName>MRP-L42</shortName>
    </alternativeName>
</protein>
<evidence type="ECO:0000250" key="1"/>
<evidence type="ECO:0000250" key="2">
    <source>
        <dbReference type="UniProtKB" id="Q9Y6G3"/>
    </source>
</evidence>
<evidence type="ECO:0000305" key="3"/>
<comment type="subunit">
    <text evidence="2">Component of the mitochondrial ribosome large subunit (39S) which comprises a 16S rRNA and about 50 distinct proteins. Component of the mitochondrial ribosome small subunit (28S) which comprises a 12S rRNA and about 30 distinct proteins.</text>
</comment>
<comment type="subcellular location">
    <subcellularLocation>
        <location evidence="2">Mitochondrion</location>
    </subcellularLocation>
</comment>
<comment type="similarity">
    <text evidence="3">Belongs to the mitochondrion-specific ribosomal protein mL42 family.</text>
</comment>
<comment type="caution">
    <text evidence="3">Has been found in the mitochondrial ribosome large and small subunits.</text>
</comment>
<keyword id="KW-0496">Mitochondrion</keyword>
<keyword id="KW-1185">Reference proteome</keyword>
<keyword id="KW-0687">Ribonucleoprotein</keyword>
<keyword id="KW-0689">Ribosomal protein</keyword>
<keyword id="KW-0809">Transit peptide</keyword>
<organism>
    <name type="scientific">Mus musculus</name>
    <name type="common">Mouse</name>
    <dbReference type="NCBI Taxonomy" id="10090"/>
    <lineage>
        <taxon>Eukaryota</taxon>
        <taxon>Metazoa</taxon>
        <taxon>Chordata</taxon>
        <taxon>Craniata</taxon>
        <taxon>Vertebrata</taxon>
        <taxon>Euteleostomi</taxon>
        <taxon>Mammalia</taxon>
        <taxon>Eutheria</taxon>
        <taxon>Euarchontoglires</taxon>
        <taxon>Glires</taxon>
        <taxon>Rodentia</taxon>
        <taxon>Myomorpha</taxon>
        <taxon>Muroidea</taxon>
        <taxon>Muridae</taxon>
        <taxon>Murinae</taxon>
        <taxon>Mus</taxon>
        <taxon>Mus</taxon>
    </lineage>
</organism>